<gene>
    <name type="primary">IFNG</name>
</gene>
<keyword id="KW-0051">Antiviral defense</keyword>
<keyword id="KW-0202">Cytokine</keyword>
<keyword id="KW-0325">Glycoprotein</keyword>
<keyword id="KW-0341">Growth regulation</keyword>
<keyword id="KW-0873">Pyrrolidone carboxylic acid</keyword>
<keyword id="KW-1185">Reference proteome</keyword>
<keyword id="KW-0964">Secreted</keyword>
<keyword id="KW-0732">Signal</keyword>
<reference key="1">
    <citation type="journal article" date="1993" name="DNA Seq.">
        <title>The molecular cloning and sequence of the common marmoset interferon-gamma (MaIFN-gamma) gene.</title>
        <authorList>
            <person name="Kaba A."/>
            <person name="Eladari M.E."/>
            <person name="Mohammad-Ali K."/>
            <person name="Rhodes-Feuillette A."/>
            <person name="Galibert F."/>
        </authorList>
    </citation>
    <scope>NUCLEOTIDE SEQUENCE [GENOMIC DNA]</scope>
    <source>
        <tissue>Blood</tissue>
    </source>
</reference>
<protein>
    <recommendedName>
        <fullName>Interferon gamma</fullName>
        <shortName>IFN-gamma</shortName>
    </recommendedName>
</protein>
<sequence>MKYTSYILAFQLCVVLGSLGCYCQDPYVKEAENLKKYFNAGDSDVADNGTLFLDILRTWREEGDRKIMQSQIISFYFKLFKNFKDNQSIQKSMETIKEDMNVKFFNSNKRKQDDFERLTNYSVNDLNVQRKAIHELIQVMAELSPAPKIGKRRRSQTLFRGRRASQ</sequence>
<evidence type="ECO:0000250" key="1"/>
<evidence type="ECO:0000250" key="2">
    <source>
        <dbReference type="UniProtKB" id="P01579"/>
    </source>
</evidence>
<evidence type="ECO:0000250" key="3">
    <source>
        <dbReference type="UniProtKB" id="P01580"/>
    </source>
</evidence>
<evidence type="ECO:0000255" key="4"/>
<evidence type="ECO:0000305" key="5"/>
<accession>P28341</accession>
<organism>
    <name type="scientific">Callithrix jacchus</name>
    <name type="common">White-tufted-ear marmoset</name>
    <dbReference type="NCBI Taxonomy" id="9483"/>
    <lineage>
        <taxon>Eukaryota</taxon>
        <taxon>Metazoa</taxon>
        <taxon>Chordata</taxon>
        <taxon>Craniata</taxon>
        <taxon>Vertebrata</taxon>
        <taxon>Euteleostomi</taxon>
        <taxon>Mammalia</taxon>
        <taxon>Eutheria</taxon>
        <taxon>Euarchontoglires</taxon>
        <taxon>Primates</taxon>
        <taxon>Haplorrhini</taxon>
        <taxon>Platyrrhini</taxon>
        <taxon>Cebidae</taxon>
        <taxon>Callitrichinae</taxon>
        <taxon>Callithrix</taxon>
        <taxon>Callithrix</taxon>
    </lineage>
</organism>
<name>IFNG_CALJA</name>
<proteinExistence type="evidence at transcript level"/>
<comment type="function">
    <text evidence="2 3">Type II interferon produced by immune cells such as T-cells and NK cells that plays crucial roles in antimicrobial, antiviral, and antitumor responses by activating effector immune cells and enhancing antigen presentation. Primarily signals through the JAK-STAT pathway after interaction with its receptor IFNGR1 to affect gene regulation. Upon IFNG binding, IFNGR1 intracellular domain opens out to allow association of downstream signaling components JAK2, JAK1 and STAT1, leading to STAT1 activation, nuclear translocation and transcription of IFNG-regulated genes. Many of the induced genes are transcription factors such as IRF1 that are able to further drive regulation of a next wave of transcription. Plays a role in class I antigen presentation pathway by inducing a replacement of catalytic proteasome subunits with immunoproteasome subunits. In turn, increases the quantity, quality, and repertoire of peptides for class I MHC loading. Increases the efficiency of peptide generation also by inducing the expression of activator PA28 that associates with the proteasome and alters its proteolytic cleavage preference. Up-regulates as well MHC II complexes on the cell surface by promoting expression of several key molecules such as cathepsins B/CTSB, H/CTSH, and L/CTSL (By similarity). Participates in the regulation of hematopoietic stem cells during development and under homeostatic conditions by affecting their development, quiescence, and differentiation (By similarity).</text>
</comment>
<comment type="subunit">
    <text evidence="2">Homodimer. Interacts with IFNGR1 (via extracellular domain); this interaction promotes IFNGR1 dimerization.</text>
</comment>
<comment type="subcellular location">
    <subcellularLocation>
        <location evidence="2">Secreted</location>
    </subcellularLocation>
</comment>
<comment type="tissue specificity">
    <text>Released primarily from activated T lymphocytes.</text>
</comment>
<comment type="similarity">
    <text evidence="5">Belongs to the type II (or gamma) interferon family.</text>
</comment>
<dbReference type="EMBL" id="X64659">
    <property type="protein sequence ID" value="CAA45925.1"/>
    <property type="molecule type" value="Genomic_DNA"/>
</dbReference>
<dbReference type="PIR" id="A56692">
    <property type="entry name" value="IVCJG"/>
</dbReference>
<dbReference type="SMR" id="P28341"/>
<dbReference type="FunCoup" id="P28341">
    <property type="interactions" value="809"/>
</dbReference>
<dbReference type="STRING" id="9483.ENSCJAP00000056963"/>
<dbReference type="GlyCosmos" id="P28341">
    <property type="glycosylation" value="3 sites, No reported glycans"/>
</dbReference>
<dbReference type="eggNOG" id="ENOG502SBGW">
    <property type="taxonomic scope" value="Eukaryota"/>
</dbReference>
<dbReference type="InParanoid" id="P28341"/>
<dbReference type="Proteomes" id="UP000008225">
    <property type="component" value="Unplaced"/>
</dbReference>
<dbReference type="GO" id="GO:0005615">
    <property type="term" value="C:extracellular space"/>
    <property type="evidence" value="ECO:0007669"/>
    <property type="project" value="UniProtKB-KW"/>
</dbReference>
<dbReference type="GO" id="GO:0005125">
    <property type="term" value="F:cytokine activity"/>
    <property type="evidence" value="ECO:0007669"/>
    <property type="project" value="UniProtKB-KW"/>
</dbReference>
<dbReference type="GO" id="GO:0005133">
    <property type="term" value="F:type II interferon receptor binding"/>
    <property type="evidence" value="ECO:0007669"/>
    <property type="project" value="InterPro"/>
</dbReference>
<dbReference type="GO" id="GO:0002250">
    <property type="term" value="P:adaptive immune response"/>
    <property type="evidence" value="ECO:0007669"/>
    <property type="project" value="TreeGrafter"/>
</dbReference>
<dbReference type="GO" id="GO:0051607">
    <property type="term" value="P:defense response to virus"/>
    <property type="evidence" value="ECO:0007669"/>
    <property type="project" value="UniProtKB-KW"/>
</dbReference>
<dbReference type="GO" id="GO:0006959">
    <property type="term" value="P:humoral immune response"/>
    <property type="evidence" value="ECO:0007669"/>
    <property type="project" value="TreeGrafter"/>
</dbReference>
<dbReference type="GO" id="GO:0010508">
    <property type="term" value="P:positive regulation of autophagy"/>
    <property type="evidence" value="ECO:0000250"/>
    <property type="project" value="UniProtKB"/>
</dbReference>
<dbReference type="FunFam" id="1.20.1250.10:FF:000007">
    <property type="entry name" value="Interferon gamma"/>
    <property type="match status" value="1"/>
</dbReference>
<dbReference type="Gene3D" id="1.20.1250.10">
    <property type="match status" value="1"/>
</dbReference>
<dbReference type="InterPro" id="IPR009079">
    <property type="entry name" value="4_helix_cytokine-like_core"/>
</dbReference>
<dbReference type="InterPro" id="IPR002069">
    <property type="entry name" value="Interferon_gamma"/>
</dbReference>
<dbReference type="PANTHER" id="PTHR11419">
    <property type="entry name" value="INTERFERON GAMMA"/>
    <property type="match status" value="1"/>
</dbReference>
<dbReference type="PANTHER" id="PTHR11419:SF0">
    <property type="entry name" value="INTERFERON GAMMA"/>
    <property type="match status" value="1"/>
</dbReference>
<dbReference type="Pfam" id="PF00714">
    <property type="entry name" value="IFN-gamma"/>
    <property type="match status" value="1"/>
</dbReference>
<dbReference type="PIRSF" id="PIRSF001936">
    <property type="entry name" value="IFN-gamma"/>
    <property type="match status" value="1"/>
</dbReference>
<dbReference type="SUPFAM" id="SSF47266">
    <property type="entry name" value="4-helical cytokines"/>
    <property type="match status" value="1"/>
</dbReference>
<feature type="signal peptide" evidence="1">
    <location>
        <begin position="1"/>
        <end position="23"/>
    </location>
</feature>
<feature type="chain" id="PRO_0000016435" description="Interferon gamma">
    <location>
        <begin position="24"/>
        <end position="166"/>
    </location>
</feature>
<feature type="modified residue" description="Pyrrolidone carboxylic acid" evidence="2">
    <location>
        <position position="24"/>
    </location>
</feature>
<feature type="glycosylation site" description="N-linked (GlcNAc...) asparagine" evidence="4">
    <location>
        <position position="48"/>
    </location>
</feature>
<feature type="glycosylation site" description="N-linked (GlcNAc...) asparagine" evidence="4">
    <location>
        <position position="86"/>
    </location>
</feature>
<feature type="glycosylation site" description="N-linked (GlcNAc...) asparagine" evidence="4">
    <location>
        <position position="120"/>
    </location>
</feature>